<accession>Q9A0D6</accession>
<accession>Q48ZG7</accession>
<keyword id="KW-1185">Reference proteome</keyword>
<keyword id="KW-0687">Ribonucleoprotein</keyword>
<keyword id="KW-0689">Ribosomal protein</keyword>
<keyword id="KW-0694">RNA-binding</keyword>
<keyword id="KW-0699">rRNA-binding</keyword>
<reference key="1">
    <citation type="journal article" date="2001" name="Proc. Natl. Acad. Sci. U.S.A.">
        <title>Complete genome sequence of an M1 strain of Streptococcus pyogenes.</title>
        <authorList>
            <person name="Ferretti J.J."/>
            <person name="McShan W.M."/>
            <person name="Ajdic D.J."/>
            <person name="Savic D.J."/>
            <person name="Savic G."/>
            <person name="Lyon K."/>
            <person name="Primeaux C."/>
            <person name="Sezate S."/>
            <person name="Suvorov A.N."/>
            <person name="Kenton S."/>
            <person name="Lai H.S."/>
            <person name="Lin S.P."/>
            <person name="Qian Y."/>
            <person name="Jia H.G."/>
            <person name="Najar F.Z."/>
            <person name="Ren Q."/>
            <person name="Zhu H."/>
            <person name="Song L."/>
            <person name="White J."/>
            <person name="Yuan X."/>
            <person name="Clifton S.W."/>
            <person name="Roe B.A."/>
            <person name="McLaughlin R.E."/>
        </authorList>
    </citation>
    <scope>NUCLEOTIDE SEQUENCE [LARGE SCALE GENOMIC DNA]</scope>
    <source>
        <strain>ATCC 700294 / SF370 / Serotype M1</strain>
    </source>
</reference>
<reference key="2">
    <citation type="journal article" date="2005" name="J. Infect. Dis.">
        <title>Evolutionary origin and emergence of a highly successful clone of serotype M1 group A Streptococcus involved multiple horizontal gene transfer events.</title>
        <authorList>
            <person name="Sumby P."/>
            <person name="Porcella S.F."/>
            <person name="Madrigal A.G."/>
            <person name="Barbian K.D."/>
            <person name="Virtaneva K."/>
            <person name="Ricklefs S.M."/>
            <person name="Sturdevant D.E."/>
            <person name="Graham M.R."/>
            <person name="Vuopio-Varkila J."/>
            <person name="Hoe N.P."/>
            <person name="Musser J.M."/>
        </authorList>
    </citation>
    <scope>NUCLEOTIDE SEQUENCE [LARGE SCALE GENOMIC DNA]</scope>
    <source>
        <strain>ATCC BAA-947 / MGAS5005 / Serotype M1</strain>
    </source>
</reference>
<proteinExistence type="inferred from homology"/>
<feature type="chain" id="PRO_0000269393" description="Large ribosomal subunit protein bL21">
    <location>
        <begin position="1"/>
        <end position="104"/>
    </location>
</feature>
<comment type="function">
    <text evidence="1">This protein binds to 23S rRNA in the presence of protein L20.</text>
</comment>
<comment type="subunit">
    <text evidence="1">Part of the 50S ribosomal subunit. Contacts protein L20.</text>
</comment>
<comment type="similarity">
    <text evidence="1">Belongs to the bacterial ribosomal protein bL21 family.</text>
</comment>
<gene>
    <name evidence="1" type="primary">rplU</name>
    <name type="ordered locus">SPy_0819</name>
    <name type="ordered locus">M5005_Spy0633</name>
</gene>
<organism>
    <name type="scientific">Streptococcus pyogenes serotype M1</name>
    <dbReference type="NCBI Taxonomy" id="301447"/>
    <lineage>
        <taxon>Bacteria</taxon>
        <taxon>Bacillati</taxon>
        <taxon>Bacillota</taxon>
        <taxon>Bacilli</taxon>
        <taxon>Lactobacillales</taxon>
        <taxon>Streptococcaceae</taxon>
        <taxon>Streptococcus</taxon>
    </lineage>
</organism>
<name>RL21_STRP1</name>
<protein>
    <recommendedName>
        <fullName evidence="1">Large ribosomal subunit protein bL21</fullName>
    </recommendedName>
    <alternativeName>
        <fullName evidence="2">50S ribosomal protein L21</fullName>
    </alternativeName>
</protein>
<sequence>MSTYAIIKTGGKQVKVEVGQAIYVEKIDAEAGAEVTFNEVVLVGGDKTVVGTPVVEGATVVGTVEKQGKQKKVVTFKYKPKKGSHRKQGHRQPYTKVVINAINA</sequence>
<evidence type="ECO:0000255" key="1">
    <source>
        <dbReference type="HAMAP-Rule" id="MF_01363"/>
    </source>
</evidence>
<evidence type="ECO:0000305" key="2"/>
<dbReference type="EMBL" id="AE004092">
    <property type="protein sequence ID" value="AAK33755.1"/>
    <property type="molecule type" value="Genomic_DNA"/>
</dbReference>
<dbReference type="EMBL" id="CP000017">
    <property type="protein sequence ID" value="AAZ51251.1"/>
    <property type="molecule type" value="Genomic_DNA"/>
</dbReference>
<dbReference type="RefSeq" id="NP_269034.1">
    <property type="nucleotide sequence ID" value="NC_002737.2"/>
</dbReference>
<dbReference type="SMR" id="Q9A0D6"/>
<dbReference type="PaxDb" id="1314-HKU360_00645"/>
<dbReference type="KEGG" id="spy:SPy_0819"/>
<dbReference type="KEGG" id="spz:M5005_Spy0633"/>
<dbReference type="PATRIC" id="fig|160490.10.peg.702"/>
<dbReference type="HOGENOM" id="CLU_061463_3_1_9"/>
<dbReference type="OMA" id="HRQPFTK"/>
<dbReference type="PRO" id="PR:Q9A0D6"/>
<dbReference type="Proteomes" id="UP000000750">
    <property type="component" value="Chromosome"/>
</dbReference>
<dbReference type="GO" id="GO:0005737">
    <property type="term" value="C:cytoplasm"/>
    <property type="evidence" value="ECO:0007669"/>
    <property type="project" value="UniProtKB-ARBA"/>
</dbReference>
<dbReference type="GO" id="GO:1990904">
    <property type="term" value="C:ribonucleoprotein complex"/>
    <property type="evidence" value="ECO:0007669"/>
    <property type="project" value="UniProtKB-KW"/>
</dbReference>
<dbReference type="GO" id="GO:0005840">
    <property type="term" value="C:ribosome"/>
    <property type="evidence" value="ECO:0007669"/>
    <property type="project" value="UniProtKB-KW"/>
</dbReference>
<dbReference type="GO" id="GO:0019843">
    <property type="term" value="F:rRNA binding"/>
    <property type="evidence" value="ECO:0007669"/>
    <property type="project" value="UniProtKB-UniRule"/>
</dbReference>
<dbReference type="GO" id="GO:0003735">
    <property type="term" value="F:structural constituent of ribosome"/>
    <property type="evidence" value="ECO:0007669"/>
    <property type="project" value="InterPro"/>
</dbReference>
<dbReference type="GO" id="GO:0006412">
    <property type="term" value="P:translation"/>
    <property type="evidence" value="ECO:0007669"/>
    <property type="project" value="UniProtKB-UniRule"/>
</dbReference>
<dbReference type="HAMAP" id="MF_01363">
    <property type="entry name" value="Ribosomal_bL21"/>
    <property type="match status" value="1"/>
</dbReference>
<dbReference type="InterPro" id="IPR028909">
    <property type="entry name" value="bL21-like"/>
</dbReference>
<dbReference type="InterPro" id="IPR036164">
    <property type="entry name" value="bL21-like_sf"/>
</dbReference>
<dbReference type="InterPro" id="IPR001787">
    <property type="entry name" value="Ribosomal_bL21"/>
</dbReference>
<dbReference type="InterPro" id="IPR018258">
    <property type="entry name" value="Ribosomal_bL21_CS"/>
</dbReference>
<dbReference type="NCBIfam" id="TIGR00061">
    <property type="entry name" value="L21"/>
    <property type="match status" value="1"/>
</dbReference>
<dbReference type="PANTHER" id="PTHR21349">
    <property type="entry name" value="50S RIBOSOMAL PROTEIN L21"/>
    <property type="match status" value="1"/>
</dbReference>
<dbReference type="PANTHER" id="PTHR21349:SF0">
    <property type="entry name" value="LARGE RIBOSOMAL SUBUNIT PROTEIN BL21M"/>
    <property type="match status" value="1"/>
</dbReference>
<dbReference type="Pfam" id="PF00829">
    <property type="entry name" value="Ribosomal_L21p"/>
    <property type="match status" value="1"/>
</dbReference>
<dbReference type="SUPFAM" id="SSF141091">
    <property type="entry name" value="L21p-like"/>
    <property type="match status" value="1"/>
</dbReference>
<dbReference type="PROSITE" id="PS01169">
    <property type="entry name" value="RIBOSOMAL_L21"/>
    <property type="match status" value="1"/>
</dbReference>